<name>RS3_BACCZ</name>
<gene>
    <name evidence="1" type="primary">rpsC</name>
    <name type="ordered locus">BCE33L0110</name>
</gene>
<protein>
    <recommendedName>
        <fullName evidence="1">Small ribosomal subunit protein uS3</fullName>
    </recommendedName>
    <alternativeName>
        <fullName evidence="2">30S ribosomal protein S3</fullName>
    </alternativeName>
</protein>
<comment type="function">
    <text evidence="1">Binds the lower part of the 30S subunit head. Binds mRNA in the 70S ribosome, positioning it for translation.</text>
</comment>
<comment type="subunit">
    <text evidence="1">Part of the 30S ribosomal subunit. Forms a tight complex with proteins S10 and S14.</text>
</comment>
<comment type="similarity">
    <text evidence="1">Belongs to the universal ribosomal protein uS3 family.</text>
</comment>
<keyword id="KW-0687">Ribonucleoprotein</keyword>
<keyword id="KW-0689">Ribosomal protein</keyword>
<keyword id="KW-0694">RNA-binding</keyword>
<keyword id="KW-0699">rRNA-binding</keyword>
<reference key="1">
    <citation type="journal article" date="2006" name="J. Bacteriol.">
        <title>Pathogenomic sequence analysis of Bacillus cereus and Bacillus thuringiensis isolates closely related to Bacillus anthracis.</title>
        <authorList>
            <person name="Han C.S."/>
            <person name="Xie G."/>
            <person name="Challacombe J.F."/>
            <person name="Altherr M.R."/>
            <person name="Bhotika S.S."/>
            <person name="Bruce D."/>
            <person name="Campbell C.S."/>
            <person name="Campbell M.L."/>
            <person name="Chen J."/>
            <person name="Chertkov O."/>
            <person name="Cleland C."/>
            <person name="Dimitrijevic M."/>
            <person name="Doggett N.A."/>
            <person name="Fawcett J.J."/>
            <person name="Glavina T."/>
            <person name="Goodwin L.A."/>
            <person name="Hill K.K."/>
            <person name="Hitchcock P."/>
            <person name="Jackson P.J."/>
            <person name="Keim P."/>
            <person name="Kewalramani A.R."/>
            <person name="Longmire J."/>
            <person name="Lucas S."/>
            <person name="Malfatti S."/>
            <person name="McMurry K."/>
            <person name="Meincke L.J."/>
            <person name="Misra M."/>
            <person name="Moseman B.L."/>
            <person name="Mundt M."/>
            <person name="Munk A.C."/>
            <person name="Okinaka R.T."/>
            <person name="Parson-Quintana B."/>
            <person name="Reilly L.P."/>
            <person name="Richardson P."/>
            <person name="Robinson D.L."/>
            <person name="Rubin E."/>
            <person name="Saunders E."/>
            <person name="Tapia R."/>
            <person name="Tesmer J.G."/>
            <person name="Thayer N."/>
            <person name="Thompson L.S."/>
            <person name="Tice H."/>
            <person name="Ticknor L.O."/>
            <person name="Wills P.L."/>
            <person name="Brettin T.S."/>
            <person name="Gilna P."/>
        </authorList>
    </citation>
    <scope>NUCLEOTIDE SEQUENCE [LARGE SCALE GENOMIC DNA]</scope>
    <source>
        <strain>ZK / E33L</strain>
    </source>
</reference>
<feature type="chain" id="PRO_0000130067" description="Small ribosomal subunit protein uS3">
    <location>
        <begin position="1"/>
        <end position="219"/>
    </location>
</feature>
<feature type="domain" description="KH type-2" evidence="1">
    <location>
        <begin position="38"/>
        <end position="106"/>
    </location>
</feature>
<organism>
    <name type="scientific">Bacillus cereus (strain ZK / E33L)</name>
    <dbReference type="NCBI Taxonomy" id="288681"/>
    <lineage>
        <taxon>Bacteria</taxon>
        <taxon>Bacillati</taxon>
        <taxon>Bacillota</taxon>
        <taxon>Bacilli</taxon>
        <taxon>Bacillales</taxon>
        <taxon>Bacillaceae</taxon>
        <taxon>Bacillus</taxon>
        <taxon>Bacillus cereus group</taxon>
    </lineage>
</organism>
<evidence type="ECO:0000255" key="1">
    <source>
        <dbReference type="HAMAP-Rule" id="MF_01309"/>
    </source>
</evidence>
<evidence type="ECO:0000305" key="2"/>
<sequence length="219" mass="24294">MGQKVNPIGLRVGVIRDWESRWFAEKDYATLLHEDIKIREYINVRLKDSAVAKVEIERAANRVNVTIHTAKPGMVIGKGGTEVEALRKALNQLTGKRVHINILEVKRADLNAKLVGENIARQLENRVSFRRAQKQVIQRAMRAGAKGIKTQVSGRLGGADIARAESYSEGTVPLHTLRADIDYAAVEADTTYGKLGVKVWIYRGEVLPTKKKASEEGGK</sequence>
<dbReference type="EMBL" id="CP000001">
    <property type="protein sequence ID" value="AAU20123.1"/>
    <property type="molecule type" value="Genomic_DNA"/>
</dbReference>
<dbReference type="RefSeq" id="WP_000529956.1">
    <property type="nucleotide sequence ID" value="NZ_CP009968.1"/>
</dbReference>
<dbReference type="SMR" id="Q63H84"/>
<dbReference type="GeneID" id="93010937"/>
<dbReference type="KEGG" id="bcz:BCE33L0110"/>
<dbReference type="PATRIC" id="fig|288681.22.peg.41"/>
<dbReference type="Proteomes" id="UP000002612">
    <property type="component" value="Chromosome"/>
</dbReference>
<dbReference type="GO" id="GO:0022627">
    <property type="term" value="C:cytosolic small ribosomal subunit"/>
    <property type="evidence" value="ECO:0007669"/>
    <property type="project" value="TreeGrafter"/>
</dbReference>
<dbReference type="GO" id="GO:0003729">
    <property type="term" value="F:mRNA binding"/>
    <property type="evidence" value="ECO:0007669"/>
    <property type="project" value="UniProtKB-UniRule"/>
</dbReference>
<dbReference type="GO" id="GO:0019843">
    <property type="term" value="F:rRNA binding"/>
    <property type="evidence" value="ECO:0007669"/>
    <property type="project" value="UniProtKB-UniRule"/>
</dbReference>
<dbReference type="GO" id="GO:0003735">
    <property type="term" value="F:structural constituent of ribosome"/>
    <property type="evidence" value="ECO:0007669"/>
    <property type="project" value="InterPro"/>
</dbReference>
<dbReference type="GO" id="GO:0006412">
    <property type="term" value="P:translation"/>
    <property type="evidence" value="ECO:0007669"/>
    <property type="project" value="UniProtKB-UniRule"/>
</dbReference>
<dbReference type="CDD" id="cd02412">
    <property type="entry name" value="KH-II_30S_S3"/>
    <property type="match status" value="1"/>
</dbReference>
<dbReference type="FunFam" id="3.30.1140.32:FF:000001">
    <property type="entry name" value="30S ribosomal protein S3"/>
    <property type="match status" value="1"/>
</dbReference>
<dbReference type="FunFam" id="3.30.300.20:FF:000001">
    <property type="entry name" value="30S ribosomal protein S3"/>
    <property type="match status" value="1"/>
</dbReference>
<dbReference type="Gene3D" id="3.30.300.20">
    <property type="match status" value="1"/>
</dbReference>
<dbReference type="Gene3D" id="3.30.1140.32">
    <property type="entry name" value="Ribosomal protein S3, C-terminal domain"/>
    <property type="match status" value="1"/>
</dbReference>
<dbReference type="HAMAP" id="MF_01309_B">
    <property type="entry name" value="Ribosomal_uS3_B"/>
    <property type="match status" value="1"/>
</dbReference>
<dbReference type="InterPro" id="IPR004087">
    <property type="entry name" value="KH_dom"/>
</dbReference>
<dbReference type="InterPro" id="IPR015946">
    <property type="entry name" value="KH_dom-like_a/b"/>
</dbReference>
<dbReference type="InterPro" id="IPR004044">
    <property type="entry name" value="KH_dom_type_2"/>
</dbReference>
<dbReference type="InterPro" id="IPR009019">
    <property type="entry name" value="KH_sf_prok-type"/>
</dbReference>
<dbReference type="InterPro" id="IPR036419">
    <property type="entry name" value="Ribosomal_S3_C_sf"/>
</dbReference>
<dbReference type="InterPro" id="IPR005704">
    <property type="entry name" value="Ribosomal_uS3_bac-typ"/>
</dbReference>
<dbReference type="InterPro" id="IPR001351">
    <property type="entry name" value="Ribosomal_uS3_C"/>
</dbReference>
<dbReference type="InterPro" id="IPR018280">
    <property type="entry name" value="Ribosomal_uS3_CS"/>
</dbReference>
<dbReference type="NCBIfam" id="TIGR01009">
    <property type="entry name" value="rpsC_bact"/>
    <property type="match status" value="1"/>
</dbReference>
<dbReference type="PANTHER" id="PTHR11760">
    <property type="entry name" value="30S/40S RIBOSOMAL PROTEIN S3"/>
    <property type="match status" value="1"/>
</dbReference>
<dbReference type="PANTHER" id="PTHR11760:SF19">
    <property type="entry name" value="SMALL RIBOSOMAL SUBUNIT PROTEIN US3C"/>
    <property type="match status" value="1"/>
</dbReference>
<dbReference type="Pfam" id="PF07650">
    <property type="entry name" value="KH_2"/>
    <property type="match status" value="1"/>
</dbReference>
<dbReference type="Pfam" id="PF00189">
    <property type="entry name" value="Ribosomal_S3_C"/>
    <property type="match status" value="1"/>
</dbReference>
<dbReference type="SMART" id="SM00322">
    <property type="entry name" value="KH"/>
    <property type="match status" value="1"/>
</dbReference>
<dbReference type="SUPFAM" id="SSF54814">
    <property type="entry name" value="Prokaryotic type KH domain (KH-domain type II)"/>
    <property type="match status" value="1"/>
</dbReference>
<dbReference type="SUPFAM" id="SSF54821">
    <property type="entry name" value="Ribosomal protein S3 C-terminal domain"/>
    <property type="match status" value="1"/>
</dbReference>
<dbReference type="PROSITE" id="PS50823">
    <property type="entry name" value="KH_TYPE_2"/>
    <property type="match status" value="1"/>
</dbReference>
<dbReference type="PROSITE" id="PS00548">
    <property type="entry name" value="RIBOSOMAL_S3"/>
    <property type="match status" value="1"/>
</dbReference>
<accession>Q63H84</accession>
<proteinExistence type="inferred from homology"/>